<evidence type="ECO:0000255" key="1">
    <source>
        <dbReference type="HAMAP-Rule" id="MF_01677"/>
    </source>
</evidence>
<feature type="chain" id="PRO_0000357089" description="Methylthioribulose-1-phosphate dehydratase">
    <location>
        <begin position="1"/>
        <end position="250"/>
    </location>
</feature>
<feature type="binding site" evidence="1">
    <location>
        <position position="103"/>
    </location>
    <ligand>
        <name>Zn(2+)</name>
        <dbReference type="ChEBI" id="CHEBI:29105"/>
    </ligand>
</feature>
<feature type="binding site" evidence="1">
    <location>
        <position position="105"/>
    </location>
    <ligand>
        <name>Zn(2+)</name>
        <dbReference type="ChEBI" id="CHEBI:29105"/>
    </ligand>
</feature>
<name>MTNB_LEPBL</name>
<gene>
    <name evidence="1" type="primary">mtnB</name>
    <name type="ordered locus">LBL_4232</name>
</gene>
<keyword id="KW-0028">Amino-acid biosynthesis</keyword>
<keyword id="KW-0456">Lyase</keyword>
<keyword id="KW-0479">Metal-binding</keyword>
<keyword id="KW-0486">Methionine biosynthesis</keyword>
<keyword id="KW-0862">Zinc</keyword>
<comment type="function">
    <text evidence="1">Catalyzes the dehydration of methylthioribulose-1-phosphate (MTRu-1-P) into 2,3-diketo-5-methylthiopentyl-1-phosphate (DK-MTP-1-P).</text>
</comment>
<comment type="catalytic activity">
    <reaction evidence="1">
        <text>5-(methylsulfanyl)-D-ribulose 1-phosphate = 5-methylsulfanyl-2,3-dioxopentyl phosphate + H2O</text>
        <dbReference type="Rhea" id="RHEA:15549"/>
        <dbReference type="ChEBI" id="CHEBI:15377"/>
        <dbReference type="ChEBI" id="CHEBI:58548"/>
        <dbReference type="ChEBI" id="CHEBI:58828"/>
        <dbReference type="EC" id="4.2.1.109"/>
    </reaction>
</comment>
<comment type="cofactor">
    <cofactor evidence="1">
        <name>Zn(2+)</name>
        <dbReference type="ChEBI" id="CHEBI:29105"/>
    </cofactor>
    <text evidence="1">Binds 1 zinc ion per subunit.</text>
</comment>
<comment type="pathway">
    <text evidence="1">Amino-acid biosynthesis; L-methionine biosynthesis via salvage pathway; L-methionine from S-methyl-5-thio-alpha-D-ribose 1-phosphate: step 2/6.</text>
</comment>
<comment type="similarity">
    <text evidence="1">Belongs to the aldolase class II family. MtnB subfamily.</text>
</comment>
<dbReference type="EC" id="4.2.1.109" evidence="1"/>
<dbReference type="EMBL" id="CP000349">
    <property type="protein sequence ID" value="ABJ80543.1"/>
    <property type="molecule type" value="Genomic_DNA"/>
</dbReference>
<dbReference type="RefSeq" id="WP_011671396.1">
    <property type="nucleotide sequence ID" value="NC_008509.1"/>
</dbReference>
<dbReference type="SMR" id="Q04WK2"/>
<dbReference type="KEGG" id="lbl:LBL_4232"/>
<dbReference type="HOGENOM" id="CLU_006033_4_1_12"/>
<dbReference type="UniPathway" id="UPA00904">
    <property type="reaction ID" value="UER00875"/>
</dbReference>
<dbReference type="GO" id="GO:0005737">
    <property type="term" value="C:cytoplasm"/>
    <property type="evidence" value="ECO:0007669"/>
    <property type="project" value="InterPro"/>
</dbReference>
<dbReference type="GO" id="GO:0046570">
    <property type="term" value="F:methylthioribulose 1-phosphate dehydratase activity"/>
    <property type="evidence" value="ECO:0007669"/>
    <property type="project" value="UniProtKB-UniRule"/>
</dbReference>
<dbReference type="GO" id="GO:0008270">
    <property type="term" value="F:zinc ion binding"/>
    <property type="evidence" value="ECO:0007669"/>
    <property type="project" value="UniProtKB-UniRule"/>
</dbReference>
<dbReference type="GO" id="GO:0019509">
    <property type="term" value="P:L-methionine salvage from methylthioadenosine"/>
    <property type="evidence" value="ECO:0007669"/>
    <property type="project" value="UniProtKB-UniRule"/>
</dbReference>
<dbReference type="Gene3D" id="3.40.225.10">
    <property type="entry name" value="Class II aldolase/adducin N-terminal domain"/>
    <property type="match status" value="1"/>
</dbReference>
<dbReference type="HAMAP" id="MF_01677">
    <property type="entry name" value="Salvage_MtnB"/>
    <property type="match status" value="1"/>
</dbReference>
<dbReference type="InterPro" id="IPR001303">
    <property type="entry name" value="Aldolase_II/adducin_N"/>
</dbReference>
<dbReference type="InterPro" id="IPR036409">
    <property type="entry name" value="Aldolase_II/adducin_N_sf"/>
</dbReference>
<dbReference type="InterPro" id="IPR017714">
    <property type="entry name" value="MethylthioRu-1-P_deHdtase_MtnB"/>
</dbReference>
<dbReference type="NCBIfam" id="TIGR03328">
    <property type="entry name" value="salvage_mtnB"/>
    <property type="match status" value="1"/>
</dbReference>
<dbReference type="PANTHER" id="PTHR10640">
    <property type="entry name" value="METHYLTHIORIBULOSE-1-PHOSPHATE DEHYDRATASE"/>
    <property type="match status" value="1"/>
</dbReference>
<dbReference type="PANTHER" id="PTHR10640:SF7">
    <property type="entry name" value="METHYLTHIORIBULOSE-1-PHOSPHATE DEHYDRATASE"/>
    <property type="match status" value="1"/>
</dbReference>
<dbReference type="Pfam" id="PF00596">
    <property type="entry name" value="Aldolase_II"/>
    <property type="match status" value="1"/>
</dbReference>
<dbReference type="SMART" id="SM01007">
    <property type="entry name" value="Aldolase_II"/>
    <property type="match status" value="1"/>
</dbReference>
<dbReference type="SUPFAM" id="SSF53639">
    <property type="entry name" value="AraD/HMP-PK domain-like"/>
    <property type="match status" value="1"/>
</dbReference>
<organism>
    <name type="scientific">Leptospira borgpetersenii serovar Hardjo-bovis (strain L550)</name>
    <dbReference type="NCBI Taxonomy" id="355276"/>
    <lineage>
        <taxon>Bacteria</taxon>
        <taxon>Pseudomonadati</taxon>
        <taxon>Spirochaetota</taxon>
        <taxon>Spirochaetia</taxon>
        <taxon>Leptospirales</taxon>
        <taxon>Leptospiraceae</taxon>
        <taxon>Leptospira</taxon>
    </lineage>
</organism>
<reference key="1">
    <citation type="journal article" date="2006" name="Proc. Natl. Acad. Sci. U.S.A.">
        <title>Genome reduction in Leptospira borgpetersenii reflects limited transmission potential.</title>
        <authorList>
            <person name="Bulach D.M."/>
            <person name="Zuerner R.L."/>
            <person name="Wilson P."/>
            <person name="Seemann T."/>
            <person name="McGrath A."/>
            <person name="Cullen P.A."/>
            <person name="Davis J."/>
            <person name="Johnson M."/>
            <person name="Kuczek E."/>
            <person name="Alt D.P."/>
            <person name="Peterson-Burch B."/>
            <person name="Coppel R.L."/>
            <person name="Rood J.I."/>
            <person name="Davies J.K."/>
            <person name="Adler B."/>
        </authorList>
    </citation>
    <scope>NUCLEOTIDE SEQUENCE [LARGE SCALE GENOMIC DNA]</scope>
    <source>
        <strain>L550</strain>
    </source>
</reference>
<accession>Q04WK2</accession>
<sequence length="250" mass="28079">MSVKKQLEKLSILGATYHKNGWMPGTAGNLSVRILGESGFWVSGSGLDKNTLNKRNFLYVDLKSGRLSPSKNTKVEKGLKPSAETSIHRAVYCALDDIGCGLHVHTLESNLIRTNTSQHRPVALLELPAIEILKVYGIWKESPKVYVPVIYNFPNVQDISDCLESYLKEYKPVVPFCIIEKHGITVWGKDTVQANRNLEATDFILKYMISSRNLSNPEGKKNFPTENNTSESDRQKVYVAEFPVYPATFL</sequence>
<protein>
    <recommendedName>
        <fullName evidence="1">Methylthioribulose-1-phosphate dehydratase</fullName>
        <shortName evidence="1">MTRu-1-P dehydratase</shortName>
        <ecNumber evidence="1">4.2.1.109</ecNumber>
    </recommendedName>
</protein>
<proteinExistence type="inferred from homology"/>